<accession>Q1CAE0</accession>
<proteinExistence type="inferred from homology"/>
<name>DEOC_YERPA</name>
<sequence length="223" mass="23266">MTTNYAHYIDHTLLAMDATEAQIIKLCEEAKQHHFYAVCVNSGYVPVAAQQLAGSSVKVCSVIGFPLGAGLTAAKAFEAQAAINAGAQEIDMVINVGWLKSGKIADVKADIKAVRDNCAATPLKVILETCLLSDEQIVQVCEMCRELDVAFVKTSTGFSTGGAKEEHVKLMRATVGPVMGVKASGAVRDRATAETMIQAGATRIGTSSGVAIVSGQQAAASGY</sequence>
<keyword id="KW-0963">Cytoplasm</keyword>
<keyword id="KW-0456">Lyase</keyword>
<keyword id="KW-0704">Schiff base</keyword>
<organism>
    <name type="scientific">Yersinia pestis bv. Antiqua (strain Antiqua)</name>
    <dbReference type="NCBI Taxonomy" id="360102"/>
    <lineage>
        <taxon>Bacteria</taxon>
        <taxon>Pseudomonadati</taxon>
        <taxon>Pseudomonadota</taxon>
        <taxon>Gammaproteobacteria</taxon>
        <taxon>Enterobacterales</taxon>
        <taxon>Yersiniaceae</taxon>
        <taxon>Yersinia</taxon>
    </lineage>
</organism>
<protein>
    <recommendedName>
        <fullName evidence="1">Deoxyribose-phosphate aldolase</fullName>
        <shortName evidence="1">DERA</shortName>
        <ecNumber evidence="1">4.1.2.4</ecNumber>
    </recommendedName>
    <alternativeName>
        <fullName evidence="1">2-deoxy-D-ribose 5-phosphate aldolase</fullName>
    </alternativeName>
    <alternativeName>
        <fullName evidence="1">Phosphodeoxyriboaldolase</fullName>
        <shortName evidence="1">Deoxyriboaldolase</shortName>
    </alternativeName>
</protein>
<reference key="1">
    <citation type="journal article" date="2006" name="J. Bacteriol.">
        <title>Complete genome sequence of Yersinia pestis strains Antiqua and Nepal516: evidence of gene reduction in an emerging pathogen.</title>
        <authorList>
            <person name="Chain P.S.G."/>
            <person name="Hu P."/>
            <person name="Malfatti S.A."/>
            <person name="Radnedge L."/>
            <person name="Larimer F."/>
            <person name="Vergez L.M."/>
            <person name="Worsham P."/>
            <person name="Chu M.C."/>
            <person name="Andersen G.L."/>
        </authorList>
    </citation>
    <scope>NUCLEOTIDE SEQUENCE [LARGE SCALE GENOMIC DNA]</scope>
    <source>
        <strain>Antiqua</strain>
    </source>
</reference>
<gene>
    <name evidence="1" type="primary">deoC</name>
    <name type="ordered locus">YPA_0614</name>
</gene>
<evidence type="ECO:0000255" key="1">
    <source>
        <dbReference type="HAMAP-Rule" id="MF_00114"/>
    </source>
</evidence>
<dbReference type="EC" id="4.1.2.4" evidence="1"/>
<dbReference type="EMBL" id="CP000308">
    <property type="protein sequence ID" value="ABG12582.1"/>
    <property type="molecule type" value="Genomic_DNA"/>
</dbReference>
<dbReference type="RefSeq" id="WP_002208769.1">
    <property type="nucleotide sequence ID" value="NZ_CP009906.1"/>
</dbReference>
<dbReference type="SMR" id="Q1CAE0"/>
<dbReference type="GeneID" id="57977455"/>
<dbReference type="KEGG" id="ypa:YPA_0614"/>
<dbReference type="UniPathway" id="UPA00002">
    <property type="reaction ID" value="UER00468"/>
</dbReference>
<dbReference type="Proteomes" id="UP000001971">
    <property type="component" value="Chromosome"/>
</dbReference>
<dbReference type="GO" id="GO:0005737">
    <property type="term" value="C:cytoplasm"/>
    <property type="evidence" value="ECO:0007669"/>
    <property type="project" value="UniProtKB-SubCell"/>
</dbReference>
<dbReference type="GO" id="GO:0004139">
    <property type="term" value="F:deoxyribose-phosphate aldolase activity"/>
    <property type="evidence" value="ECO:0007669"/>
    <property type="project" value="UniProtKB-UniRule"/>
</dbReference>
<dbReference type="GO" id="GO:0006018">
    <property type="term" value="P:2-deoxyribose 1-phosphate catabolic process"/>
    <property type="evidence" value="ECO:0007669"/>
    <property type="project" value="UniProtKB-UniRule"/>
</dbReference>
<dbReference type="GO" id="GO:0016052">
    <property type="term" value="P:carbohydrate catabolic process"/>
    <property type="evidence" value="ECO:0007669"/>
    <property type="project" value="TreeGrafter"/>
</dbReference>
<dbReference type="GO" id="GO:0009264">
    <property type="term" value="P:deoxyribonucleotide catabolic process"/>
    <property type="evidence" value="ECO:0007669"/>
    <property type="project" value="InterPro"/>
</dbReference>
<dbReference type="CDD" id="cd00959">
    <property type="entry name" value="DeoC"/>
    <property type="match status" value="1"/>
</dbReference>
<dbReference type="FunFam" id="3.20.20.70:FF:000044">
    <property type="entry name" value="Deoxyribose-phosphate aldolase"/>
    <property type="match status" value="1"/>
</dbReference>
<dbReference type="Gene3D" id="3.20.20.70">
    <property type="entry name" value="Aldolase class I"/>
    <property type="match status" value="1"/>
</dbReference>
<dbReference type="HAMAP" id="MF_00114">
    <property type="entry name" value="DeoC_type1"/>
    <property type="match status" value="1"/>
</dbReference>
<dbReference type="InterPro" id="IPR013785">
    <property type="entry name" value="Aldolase_TIM"/>
</dbReference>
<dbReference type="InterPro" id="IPR011343">
    <property type="entry name" value="DeoC"/>
</dbReference>
<dbReference type="InterPro" id="IPR002915">
    <property type="entry name" value="DeoC/FbaB/LacD_aldolase"/>
</dbReference>
<dbReference type="InterPro" id="IPR028581">
    <property type="entry name" value="DeoC_typeI"/>
</dbReference>
<dbReference type="NCBIfam" id="TIGR00126">
    <property type="entry name" value="deoC"/>
    <property type="match status" value="1"/>
</dbReference>
<dbReference type="PANTHER" id="PTHR10889">
    <property type="entry name" value="DEOXYRIBOSE-PHOSPHATE ALDOLASE"/>
    <property type="match status" value="1"/>
</dbReference>
<dbReference type="PANTHER" id="PTHR10889:SF1">
    <property type="entry name" value="DEOXYRIBOSE-PHOSPHATE ALDOLASE"/>
    <property type="match status" value="1"/>
</dbReference>
<dbReference type="Pfam" id="PF01791">
    <property type="entry name" value="DeoC"/>
    <property type="match status" value="1"/>
</dbReference>
<dbReference type="PIRSF" id="PIRSF001357">
    <property type="entry name" value="DeoC"/>
    <property type="match status" value="1"/>
</dbReference>
<dbReference type="SMART" id="SM01133">
    <property type="entry name" value="DeoC"/>
    <property type="match status" value="1"/>
</dbReference>
<dbReference type="SUPFAM" id="SSF51569">
    <property type="entry name" value="Aldolase"/>
    <property type="match status" value="1"/>
</dbReference>
<comment type="function">
    <text evidence="1">Catalyzes a reversible aldol reaction between acetaldehyde and D-glyceraldehyde 3-phosphate to generate 2-deoxy-D-ribose 5-phosphate.</text>
</comment>
<comment type="catalytic activity">
    <reaction evidence="1">
        <text>2-deoxy-D-ribose 5-phosphate = D-glyceraldehyde 3-phosphate + acetaldehyde</text>
        <dbReference type="Rhea" id="RHEA:12821"/>
        <dbReference type="ChEBI" id="CHEBI:15343"/>
        <dbReference type="ChEBI" id="CHEBI:59776"/>
        <dbReference type="ChEBI" id="CHEBI:62877"/>
        <dbReference type="EC" id="4.1.2.4"/>
    </reaction>
</comment>
<comment type="pathway">
    <text evidence="1">Carbohydrate degradation; 2-deoxy-D-ribose 1-phosphate degradation; D-glyceraldehyde 3-phosphate and acetaldehyde from 2-deoxy-alpha-D-ribose 1-phosphate: step 2/2.</text>
</comment>
<comment type="subcellular location">
    <subcellularLocation>
        <location evidence="1">Cytoplasm</location>
    </subcellularLocation>
</comment>
<comment type="similarity">
    <text evidence="1">Belongs to the DeoC/FbaB aldolase family. DeoC type 1 subfamily.</text>
</comment>
<feature type="chain" id="PRO_1000015342" description="Deoxyribose-phosphate aldolase">
    <location>
        <begin position="1"/>
        <end position="223"/>
    </location>
</feature>
<feature type="active site" description="Proton donor/acceptor" evidence="1">
    <location>
        <position position="91"/>
    </location>
</feature>
<feature type="active site" description="Schiff-base intermediate with acetaldehyde" evidence="1">
    <location>
        <position position="153"/>
    </location>
</feature>
<feature type="active site" description="Proton donor/acceptor" evidence="1">
    <location>
        <position position="182"/>
    </location>
</feature>